<sequence length="729" mass="82812">MAKSVVIAEKPSVARDIARVLKCDKKGNGYLEGSKYIVTWALGHLVTLADPESYDVKYKKWNLEDLPMLPERLKLTVIKQTGKQFNAVKSQLLRKDVNEIIVATDAGREGELVARWIIDKVRINKPIKRLWISSVTDKAIKDGFANLKPGKAYDNLYASAVARSEADWYIGLNATRALTTRFNAQLNCGRVQTPTVAMIANREDEIKNFKAQTYYGIEAQTTNQLKLTWQDANGNSRSFNKEKIDGIVKGLDKHNATVLEIDKKQKKSFSPGLYDLTELQRDANKKFGYSAKETLNIMQKLYEQHKVLTYPRTDSRYISSDIVGTLPERLKACGVGEYRPLAHKVLQKPIKANKSFVDDSKVSDHHAIIPTEGYVNFSAFTDKERKIYDLVVKRFLAVLFPAFEYEQLTLRTKVGNETFIARGKTILHAGWKEVYENRFEDDDVTDDVKEQLLPRIEKGDTLTVKLIMQTSGQTKAPARFNEATLLSAMENPTKYMDTQNKQLADTLKSTGGLGTVATRADIIDKLFNSFLIEKRGKDIHITSKGRQLLDLVPEELKSPTLTGEWEQKLEAIAKGKLKKEVFISEMKNYTKEIVSEIKSSDKKYKHDNISTKSCPDCGKPMLEVNGKKGKMLVCQDRECGHRKNVSRTTNARCPQCKKKLELRGEGAGQIFACKCGYREKLSTFQERRKKESGNKADKRDVQKYMKQQKKEEEPLNNPFAEALKKLKFD</sequence>
<evidence type="ECO:0000255" key="1">
    <source>
        <dbReference type="HAMAP-Rule" id="MF_00953"/>
    </source>
</evidence>
<evidence type="ECO:0000255" key="2">
    <source>
        <dbReference type="PROSITE-ProRule" id="PRU01383"/>
    </source>
</evidence>
<evidence type="ECO:0000256" key="3">
    <source>
        <dbReference type="SAM" id="MobiDB-lite"/>
    </source>
</evidence>
<feature type="chain" id="PRO_0000286363" description="DNA topoisomerase 3">
    <location>
        <begin position="1"/>
        <end position="729"/>
    </location>
</feature>
<feature type="domain" description="Toprim" evidence="1">
    <location>
        <begin position="3"/>
        <end position="136"/>
    </location>
</feature>
<feature type="domain" description="Topo IA-type catalytic" evidence="2">
    <location>
        <begin position="153"/>
        <end position="594"/>
    </location>
</feature>
<feature type="region of interest" description="Interaction with DNA" evidence="1">
    <location>
        <begin position="187"/>
        <end position="192"/>
    </location>
</feature>
<feature type="region of interest" description="Disordered" evidence="3">
    <location>
        <begin position="686"/>
        <end position="718"/>
    </location>
</feature>
<feature type="compositionally biased region" description="Basic and acidic residues" evidence="3">
    <location>
        <begin position="686"/>
        <end position="713"/>
    </location>
</feature>
<feature type="active site" description="O-(5'-phospho-DNA)-tyrosine intermediate" evidence="2">
    <location>
        <position position="310"/>
    </location>
</feature>
<feature type="binding site" evidence="1">
    <location>
        <position position="9"/>
    </location>
    <ligand>
        <name>Mg(2+)</name>
        <dbReference type="ChEBI" id="CHEBI:18420"/>
        <note>catalytic</note>
    </ligand>
</feature>
<feature type="binding site" evidence="1">
    <location>
        <position position="105"/>
    </location>
    <ligand>
        <name>Mg(2+)</name>
        <dbReference type="ChEBI" id="CHEBI:18420"/>
        <note>catalytic</note>
    </ligand>
</feature>
<feature type="site" description="Interaction with DNA" evidence="1">
    <location>
        <position position="61"/>
    </location>
</feature>
<feature type="site" description="Interaction with DNA" evidence="1">
    <location>
        <position position="168"/>
    </location>
</feature>
<feature type="site" description="Interaction with DNA" evidence="1">
    <location>
        <position position="176"/>
    </location>
</feature>
<feature type="site" description="Interaction with DNA" evidence="1">
    <location>
        <position position="312"/>
    </location>
</feature>
<protein>
    <recommendedName>
        <fullName evidence="1">DNA topoisomerase 3</fullName>
        <ecNumber evidence="1">5.6.2.1</ecNumber>
    </recommendedName>
    <alternativeName>
        <fullName evidence="1">DNA topoisomerase III</fullName>
    </alternativeName>
</protein>
<proteinExistence type="inferred from homology"/>
<organism>
    <name type="scientific">Bacillus thuringiensis subsp. konkukian (strain 97-27)</name>
    <dbReference type="NCBI Taxonomy" id="281309"/>
    <lineage>
        <taxon>Bacteria</taxon>
        <taxon>Bacillati</taxon>
        <taxon>Bacillota</taxon>
        <taxon>Bacilli</taxon>
        <taxon>Bacillales</taxon>
        <taxon>Bacillaceae</taxon>
        <taxon>Bacillus</taxon>
        <taxon>Bacillus cereus group</taxon>
    </lineage>
</organism>
<keyword id="KW-0238">DNA-binding</keyword>
<keyword id="KW-0413">Isomerase</keyword>
<keyword id="KW-0460">Magnesium</keyword>
<keyword id="KW-0479">Metal-binding</keyword>
<keyword id="KW-0799">Topoisomerase</keyword>
<gene>
    <name evidence="1" type="primary">topB</name>
    <name type="ordered locus">BT9727_0351</name>
</gene>
<dbReference type="EC" id="5.6.2.1" evidence="1"/>
<dbReference type="EMBL" id="AE017355">
    <property type="protein sequence ID" value="AAT61238.1"/>
    <property type="molecule type" value="Genomic_DNA"/>
</dbReference>
<dbReference type="RefSeq" id="WP_001140209.1">
    <property type="nucleotide sequence ID" value="NC_005957.1"/>
</dbReference>
<dbReference type="RefSeq" id="YP_034701.1">
    <property type="nucleotide sequence ID" value="NC_005957.1"/>
</dbReference>
<dbReference type="SMR" id="Q6HP19"/>
<dbReference type="GeneID" id="45020434"/>
<dbReference type="KEGG" id="btk:BT9727_0351"/>
<dbReference type="PATRIC" id="fig|281309.8.peg.373"/>
<dbReference type="HOGENOM" id="CLU_002929_5_2_9"/>
<dbReference type="Proteomes" id="UP000001301">
    <property type="component" value="Chromosome"/>
</dbReference>
<dbReference type="GO" id="GO:0043597">
    <property type="term" value="C:cytoplasmic replication fork"/>
    <property type="evidence" value="ECO:0007669"/>
    <property type="project" value="TreeGrafter"/>
</dbReference>
<dbReference type="GO" id="GO:0003677">
    <property type="term" value="F:DNA binding"/>
    <property type="evidence" value="ECO:0007669"/>
    <property type="project" value="UniProtKB-KW"/>
</dbReference>
<dbReference type="GO" id="GO:0003917">
    <property type="term" value="F:DNA topoisomerase type I (single strand cut, ATP-independent) activity"/>
    <property type="evidence" value="ECO:0007669"/>
    <property type="project" value="UniProtKB-UniRule"/>
</dbReference>
<dbReference type="GO" id="GO:0000287">
    <property type="term" value="F:magnesium ion binding"/>
    <property type="evidence" value="ECO:0007669"/>
    <property type="project" value="UniProtKB-UniRule"/>
</dbReference>
<dbReference type="GO" id="GO:0006310">
    <property type="term" value="P:DNA recombination"/>
    <property type="evidence" value="ECO:0007669"/>
    <property type="project" value="TreeGrafter"/>
</dbReference>
<dbReference type="GO" id="GO:0006281">
    <property type="term" value="P:DNA repair"/>
    <property type="evidence" value="ECO:0007669"/>
    <property type="project" value="TreeGrafter"/>
</dbReference>
<dbReference type="GO" id="GO:0006265">
    <property type="term" value="P:DNA topological change"/>
    <property type="evidence" value="ECO:0007669"/>
    <property type="project" value="UniProtKB-UniRule"/>
</dbReference>
<dbReference type="CDD" id="cd00186">
    <property type="entry name" value="TOP1Ac"/>
    <property type="match status" value="1"/>
</dbReference>
<dbReference type="CDD" id="cd03362">
    <property type="entry name" value="TOPRIM_TopoIA_TopoIII"/>
    <property type="match status" value="1"/>
</dbReference>
<dbReference type="Gene3D" id="3.40.50.140">
    <property type="match status" value="1"/>
</dbReference>
<dbReference type="Gene3D" id="1.10.460.10">
    <property type="entry name" value="Topoisomerase I, domain 2"/>
    <property type="match status" value="1"/>
</dbReference>
<dbReference type="Gene3D" id="2.70.20.10">
    <property type="entry name" value="Topoisomerase I, domain 3"/>
    <property type="match status" value="1"/>
</dbReference>
<dbReference type="Gene3D" id="1.10.290.10">
    <property type="entry name" value="Topoisomerase I, domain 4"/>
    <property type="match status" value="1"/>
</dbReference>
<dbReference type="HAMAP" id="MF_00953">
    <property type="entry name" value="Topoisom_3_prok"/>
    <property type="match status" value="1"/>
</dbReference>
<dbReference type="InterPro" id="IPR000380">
    <property type="entry name" value="Topo_IA"/>
</dbReference>
<dbReference type="InterPro" id="IPR003601">
    <property type="entry name" value="Topo_IA_2"/>
</dbReference>
<dbReference type="InterPro" id="IPR023406">
    <property type="entry name" value="Topo_IA_AS"/>
</dbReference>
<dbReference type="InterPro" id="IPR013497">
    <property type="entry name" value="Topo_IA_cen"/>
</dbReference>
<dbReference type="InterPro" id="IPR013824">
    <property type="entry name" value="Topo_IA_cen_sub1"/>
</dbReference>
<dbReference type="InterPro" id="IPR013825">
    <property type="entry name" value="Topo_IA_cen_sub2"/>
</dbReference>
<dbReference type="InterPro" id="IPR013826">
    <property type="entry name" value="Topo_IA_cen_sub3"/>
</dbReference>
<dbReference type="InterPro" id="IPR023405">
    <property type="entry name" value="Topo_IA_core_domain"/>
</dbReference>
<dbReference type="InterPro" id="IPR003602">
    <property type="entry name" value="Topo_IA_DNA-bd_dom"/>
</dbReference>
<dbReference type="InterPro" id="IPR005738">
    <property type="entry name" value="TopoIII"/>
</dbReference>
<dbReference type="InterPro" id="IPR006171">
    <property type="entry name" value="TOPRIM_dom"/>
</dbReference>
<dbReference type="InterPro" id="IPR034144">
    <property type="entry name" value="TOPRIM_TopoIII"/>
</dbReference>
<dbReference type="NCBIfam" id="NF005829">
    <property type="entry name" value="PRK07726.1"/>
    <property type="match status" value="1"/>
</dbReference>
<dbReference type="NCBIfam" id="TIGR01056">
    <property type="entry name" value="topB"/>
    <property type="match status" value="1"/>
</dbReference>
<dbReference type="PANTHER" id="PTHR11390:SF21">
    <property type="entry name" value="DNA TOPOISOMERASE 3-ALPHA"/>
    <property type="match status" value="1"/>
</dbReference>
<dbReference type="PANTHER" id="PTHR11390">
    <property type="entry name" value="PROKARYOTIC DNA TOPOISOMERASE"/>
    <property type="match status" value="1"/>
</dbReference>
<dbReference type="Pfam" id="PF01131">
    <property type="entry name" value="Topoisom_bac"/>
    <property type="match status" value="1"/>
</dbReference>
<dbReference type="Pfam" id="PF01751">
    <property type="entry name" value="Toprim"/>
    <property type="match status" value="1"/>
</dbReference>
<dbReference type="PRINTS" id="PR00417">
    <property type="entry name" value="PRTPISMRASEI"/>
</dbReference>
<dbReference type="SMART" id="SM00437">
    <property type="entry name" value="TOP1Ac"/>
    <property type="match status" value="1"/>
</dbReference>
<dbReference type="SMART" id="SM00436">
    <property type="entry name" value="TOP1Bc"/>
    <property type="match status" value="1"/>
</dbReference>
<dbReference type="SMART" id="SM00493">
    <property type="entry name" value="TOPRIM"/>
    <property type="match status" value="1"/>
</dbReference>
<dbReference type="SUPFAM" id="SSF56712">
    <property type="entry name" value="Prokaryotic type I DNA topoisomerase"/>
    <property type="match status" value="1"/>
</dbReference>
<dbReference type="PROSITE" id="PS00396">
    <property type="entry name" value="TOPO_IA_1"/>
    <property type="match status" value="1"/>
</dbReference>
<dbReference type="PROSITE" id="PS52039">
    <property type="entry name" value="TOPO_IA_2"/>
    <property type="match status" value="1"/>
</dbReference>
<dbReference type="PROSITE" id="PS50880">
    <property type="entry name" value="TOPRIM"/>
    <property type="match status" value="1"/>
</dbReference>
<accession>Q6HP19</accession>
<name>TOP3_BACHK</name>
<reference key="1">
    <citation type="journal article" date="2006" name="J. Bacteriol.">
        <title>Pathogenomic sequence analysis of Bacillus cereus and Bacillus thuringiensis isolates closely related to Bacillus anthracis.</title>
        <authorList>
            <person name="Han C.S."/>
            <person name="Xie G."/>
            <person name="Challacombe J.F."/>
            <person name="Altherr M.R."/>
            <person name="Bhotika S.S."/>
            <person name="Bruce D."/>
            <person name="Campbell C.S."/>
            <person name="Campbell M.L."/>
            <person name="Chen J."/>
            <person name="Chertkov O."/>
            <person name="Cleland C."/>
            <person name="Dimitrijevic M."/>
            <person name="Doggett N.A."/>
            <person name="Fawcett J.J."/>
            <person name="Glavina T."/>
            <person name="Goodwin L.A."/>
            <person name="Hill K.K."/>
            <person name="Hitchcock P."/>
            <person name="Jackson P.J."/>
            <person name="Keim P."/>
            <person name="Kewalramani A.R."/>
            <person name="Longmire J."/>
            <person name="Lucas S."/>
            <person name="Malfatti S."/>
            <person name="McMurry K."/>
            <person name="Meincke L.J."/>
            <person name="Misra M."/>
            <person name="Moseman B.L."/>
            <person name="Mundt M."/>
            <person name="Munk A.C."/>
            <person name="Okinaka R.T."/>
            <person name="Parson-Quintana B."/>
            <person name="Reilly L.P."/>
            <person name="Richardson P."/>
            <person name="Robinson D.L."/>
            <person name="Rubin E."/>
            <person name="Saunders E."/>
            <person name="Tapia R."/>
            <person name="Tesmer J.G."/>
            <person name="Thayer N."/>
            <person name="Thompson L.S."/>
            <person name="Tice H."/>
            <person name="Ticknor L.O."/>
            <person name="Wills P.L."/>
            <person name="Brettin T.S."/>
            <person name="Gilna P."/>
        </authorList>
    </citation>
    <scope>NUCLEOTIDE SEQUENCE [LARGE SCALE GENOMIC DNA]</scope>
    <source>
        <strain>97-27</strain>
    </source>
</reference>
<comment type="function">
    <text evidence="1">Releases the supercoiling and torsional tension of DNA, which is introduced during the DNA replication and transcription, by transiently cleaving and rejoining one strand of the DNA duplex. Introduces a single-strand break via transesterification at a target site in duplex DNA. The scissile phosphodiester is attacked by the catalytic tyrosine of the enzyme, resulting in the formation of a DNA-(5'-phosphotyrosyl)-enzyme intermediate and the expulsion of a 3'-OH DNA strand. The free DNA strand then undergoes passage around the unbroken strand, thus removing DNA supercoils. Finally, in the religation step, the DNA 3'-OH attacks the covalent intermediate to expel the active-site tyrosine and restore the DNA phosphodiester backbone.</text>
</comment>
<comment type="catalytic activity">
    <reaction evidence="1">
        <text>ATP-independent breakage of single-stranded DNA, followed by passage and rejoining.</text>
        <dbReference type="EC" id="5.6.2.1"/>
    </reaction>
</comment>
<comment type="cofactor">
    <cofactor evidence="1">
        <name>Mg(2+)</name>
        <dbReference type="ChEBI" id="CHEBI:18420"/>
    </cofactor>
</comment>
<comment type="similarity">
    <text evidence="1 2">Belongs to the type IA topoisomerase family.</text>
</comment>